<comment type="function">
    <text evidence="1">Involved in the regulation of the intracellular balance of NAD and NADP, and is a key enzyme in the biosynthesis of NADP. Catalyzes specifically the phosphorylation on 2'-hydroxyl of the adenosine moiety of NAD to yield NADP.</text>
</comment>
<comment type="catalytic activity">
    <reaction evidence="1">
        <text>NAD(+) + ATP = ADP + NADP(+) + H(+)</text>
        <dbReference type="Rhea" id="RHEA:18629"/>
        <dbReference type="ChEBI" id="CHEBI:15378"/>
        <dbReference type="ChEBI" id="CHEBI:30616"/>
        <dbReference type="ChEBI" id="CHEBI:57540"/>
        <dbReference type="ChEBI" id="CHEBI:58349"/>
        <dbReference type="ChEBI" id="CHEBI:456216"/>
        <dbReference type="EC" id="2.7.1.23"/>
    </reaction>
</comment>
<comment type="cofactor">
    <cofactor evidence="1">
        <name>a divalent metal cation</name>
        <dbReference type="ChEBI" id="CHEBI:60240"/>
    </cofactor>
</comment>
<comment type="subcellular location">
    <subcellularLocation>
        <location evidence="1">Cytoplasm</location>
    </subcellularLocation>
</comment>
<comment type="similarity">
    <text evidence="1">Belongs to the NAD kinase family.</text>
</comment>
<evidence type="ECO:0000255" key="1">
    <source>
        <dbReference type="HAMAP-Rule" id="MF_00361"/>
    </source>
</evidence>
<organism>
    <name type="scientific">Streptococcus pneumoniae (strain P1031)</name>
    <dbReference type="NCBI Taxonomy" id="488223"/>
    <lineage>
        <taxon>Bacteria</taxon>
        <taxon>Bacillati</taxon>
        <taxon>Bacillota</taxon>
        <taxon>Bacilli</taxon>
        <taxon>Lactobacillales</taxon>
        <taxon>Streptococcaceae</taxon>
        <taxon>Streptococcus</taxon>
    </lineage>
</organism>
<accession>C1CKG4</accession>
<gene>
    <name evidence="1" type="primary">nadK</name>
    <name type="ordered locus">SPP_1103</name>
</gene>
<protein>
    <recommendedName>
        <fullName evidence="1">NAD kinase</fullName>
        <ecNumber evidence="1">2.7.1.23</ecNumber>
    </recommendedName>
    <alternativeName>
        <fullName evidence="1">ATP-dependent NAD kinase</fullName>
    </alternativeName>
</protein>
<dbReference type="EC" id="2.7.1.23" evidence="1"/>
<dbReference type="EMBL" id="CP000920">
    <property type="protein sequence ID" value="ACO21856.1"/>
    <property type="molecule type" value="Genomic_DNA"/>
</dbReference>
<dbReference type="RefSeq" id="WP_000799053.1">
    <property type="nucleotide sequence ID" value="NC_012467.1"/>
</dbReference>
<dbReference type="SMR" id="C1CKG4"/>
<dbReference type="KEGG" id="spp:SPP_1103"/>
<dbReference type="HOGENOM" id="CLU_008831_0_3_9"/>
<dbReference type="GO" id="GO:0005737">
    <property type="term" value="C:cytoplasm"/>
    <property type="evidence" value="ECO:0007669"/>
    <property type="project" value="UniProtKB-SubCell"/>
</dbReference>
<dbReference type="GO" id="GO:0005524">
    <property type="term" value="F:ATP binding"/>
    <property type="evidence" value="ECO:0007669"/>
    <property type="project" value="UniProtKB-KW"/>
</dbReference>
<dbReference type="GO" id="GO:0046872">
    <property type="term" value="F:metal ion binding"/>
    <property type="evidence" value="ECO:0007669"/>
    <property type="project" value="UniProtKB-UniRule"/>
</dbReference>
<dbReference type="GO" id="GO:0051287">
    <property type="term" value="F:NAD binding"/>
    <property type="evidence" value="ECO:0007669"/>
    <property type="project" value="UniProtKB-ARBA"/>
</dbReference>
<dbReference type="GO" id="GO:0003951">
    <property type="term" value="F:NAD+ kinase activity"/>
    <property type="evidence" value="ECO:0007669"/>
    <property type="project" value="UniProtKB-UniRule"/>
</dbReference>
<dbReference type="GO" id="GO:0019674">
    <property type="term" value="P:NAD metabolic process"/>
    <property type="evidence" value="ECO:0007669"/>
    <property type="project" value="InterPro"/>
</dbReference>
<dbReference type="GO" id="GO:0006741">
    <property type="term" value="P:NADP biosynthetic process"/>
    <property type="evidence" value="ECO:0007669"/>
    <property type="project" value="UniProtKB-UniRule"/>
</dbReference>
<dbReference type="FunFam" id="2.60.200.30:FF:000002">
    <property type="entry name" value="NAD kinase"/>
    <property type="match status" value="1"/>
</dbReference>
<dbReference type="Gene3D" id="3.40.50.10330">
    <property type="entry name" value="Probable inorganic polyphosphate/atp-NAD kinase, domain 1"/>
    <property type="match status" value="1"/>
</dbReference>
<dbReference type="Gene3D" id="2.60.200.30">
    <property type="entry name" value="Probable inorganic polyphosphate/atp-NAD kinase, domain 2"/>
    <property type="match status" value="1"/>
</dbReference>
<dbReference type="HAMAP" id="MF_00361">
    <property type="entry name" value="NAD_kinase"/>
    <property type="match status" value="1"/>
</dbReference>
<dbReference type="InterPro" id="IPR017438">
    <property type="entry name" value="ATP-NAD_kinase_N"/>
</dbReference>
<dbReference type="InterPro" id="IPR017437">
    <property type="entry name" value="ATP-NAD_kinase_PpnK-typ_C"/>
</dbReference>
<dbReference type="InterPro" id="IPR016064">
    <property type="entry name" value="NAD/diacylglycerol_kinase_sf"/>
</dbReference>
<dbReference type="InterPro" id="IPR002504">
    <property type="entry name" value="NADK"/>
</dbReference>
<dbReference type="NCBIfam" id="NF003424">
    <property type="entry name" value="PRK04885.1"/>
    <property type="match status" value="1"/>
</dbReference>
<dbReference type="PANTHER" id="PTHR20275">
    <property type="entry name" value="NAD KINASE"/>
    <property type="match status" value="1"/>
</dbReference>
<dbReference type="PANTHER" id="PTHR20275:SF0">
    <property type="entry name" value="NAD KINASE"/>
    <property type="match status" value="1"/>
</dbReference>
<dbReference type="Pfam" id="PF20143">
    <property type="entry name" value="NAD_kinase_C"/>
    <property type="match status" value="1"/>
</dbReference>
<dbReference type="SUPFAM" id="SSF111331">
    <property type="entry name" value="NAD kinase/diacylglycerol kinase-like"/>
    <property type="match status" value="1"/>
</dbReference>
<keyword id="KW-0067">ATP-binding</keyword>
<keyword id="KW-0963">Cytoplasm</keyword>
<keyword id="KW-0418">Kinase</keyword>
<keyword id="KW-0520">NAD</keyword>
<keyword id="KW-0521">NADP</keyword>
<keyword id="KW-0547">Nucleotide-binding</keyword>
<keyword id="KW-0808">Transferase</keyword>
<name>NADK_STRZP</name>
<reference key="1">
    <citation type="journal article" date="2010" name="Genome Biol.">
        <title>Structure and dynamics of the pan-genome of Streptococcus pneumoniae and closely related species.</title>
        <authorList>
            <person name="Donati C."/>
            <person name="Hiller N.L."/>
            <person name="Tettelin H."/>
            <person name="Muzzi A."/>
            <person name="Croucher N.J."/>
            <person name="Angiuoli S.V."/>
            <person name="Oggioni M."/>
            <person name="Dunning Hotopp J.C."/>
            <person name="Hu F.Z."/>
            <person name="Riley D.R."/>
            <person name="Covacci A."/>
            <person name="Mitchell T.J."/>
            <person name="Bentley S.D."/>
            <person name="Kilian M."/>
            <person name="Ehrlich G.D."/>
            <person name="Rappuoli R."/>
            <person name="Moxon E.R."/>
            <person name="Masignani V."/>
        </authorList>
    </citation>
    <scope>NUCLEOTIDE SEQUENCE [LARGE SCALE GENOMIC DNA]</scope>
    <source>
        <strain>P1031</strain>
    </source>
</reference>
<sequence length="272" mass="31035">MKNTGKRIDLIANRKPQSQRVLYELRDRLKRNQFILNDTNPDIVISIGGDGMLLSAFHKYENQLDKVRFIGLHTGHLGFYTDYRDFELDKLVTNLQLDTGARVSYPVLNVKVFLENGEVKIFRALNEASIRRSDRTMVADIVINGVPFERFRGDGLTVSTPTGSTAYNKSLGGAVLHPTIEALQLTEIASLNNRVYRTLGSSIIVPKKDKIELIPTRNDYHTISVDNSVYSFRNIERIEYQIDHHKIHFVATPSHTSFWNRVKDAFIGEVDE</sequence>
<feature type="chain" id="PRO_1000192524" description="NAD kinase">
    <location>
        <begin position="1"/>
        <end position="272"/>
    </location>
</feature>
<feature type="active site" description="Proton acceptor" evidence="1">
    <location>
        <position position="50"/>
    </location>
</feature>
<feature type="binding site" evidence="1">
    <location>
        <begin position="50"/>
        <end position="51"/>
    </location>
    <ligand>
        <name>NAD(+)</name>
        <dbReference type="ChEBI" id="CHEBI:57540"/>
    </ligand>
</feature>
<feature type="binding site" evidence="1">
    <location>
        <begin position="126"/>
        <end position="127"/>
    </location>
    <ligand>
        <name>NAD(+)</name>
        <dbReference type="ChEBI" id="CHEBI:57540"/>
    </ligand>
</feature>
<feature type="binding site" evidence="1">
    <location>
        <position position="152"/>
    </location>
    <ligand>
        <name>NAD(+)</name>
        <dbReference type="ChEBI" id="CHEBI:57540"/>
    </ligand>
</feature>
<feature type="binding site" evidence="1">
    <location>
        <position position="154"/>
    </location>
    <ligand>
        <name>NAD(+)</name>
        <dbReference type="ChEBI" id="CHEBI:57540"/>
    </ligand>
</feature>
<feature type="binding site" evidence="1">
    <location>
        <begin position="165"/>
        <end position="170"/>
    </location>
    <ligand>
        <name>NAD(+)</name>
        <dbReference type="ChEBI" id="CHEBI:57540"/>
    </ligand>
</feature>
<feature type="binding site" evidence="1">
    <location>
        <position position="189"/>
    </location>
    <ligand>
        <name>NAD(+)</name>
        <dbReference type="ChEBI" id="CHEBI:57540"/>
    </ligand>
</feature>
<proteinExistence type="inferred from homology"/>